<protein>
    <recommendedName>
        <fullName evidence="8">Protocadherin alpha-4</fullName>
        <shortName evidence="8">PCDH-alpha-4</shortName>
    </recommendedName>
    <alternativeName>
        <fullName evidence="9">Cadherin-related neuronal receptor 4</fullName>
    </alternativeName>
</protein>
<name>PCDA4_RAT</name>
<evidence type="ECO:0000250" key="1">
    <source>
        <dbReference type="UniProtKB" id="O88689"/>
    </source>
</evidence>
<evidence type="ECO:0000255" key="2"/>
<evidence type="ECO:0000255" key="3">
    <source>
        <dbReference type="PROSITE-ProRule" id="PRU00043"/>
    </source>
</evidence>
<evidence type="ECO:0000256" key="4">
    <source>
        <dbReference type="SAM" id="MobiDB-lite"/>
    </source>
</evidence>
<evidence type="ECO:0000269" key="5">
    <source>
    </source>
</evidence>
<evidence type="ECO:0000303" key="6">
    <source>
    </source>
</evidence>
<evidence type="ECO:0000303" key="7">
    <source>
    </source>
</evidence>
<evidence type="ECO:0000305" key="8"/>
<evidence type="ECO:0000312" key="9">
    <source>
        <dbReference type="EMBL" id="BAD06369.1"/>
    </source>
</evidence>
<evidence type="ECO:0000312" key="10">
    <source>
        <dbReference type="RGD" id="620337"/>
    </source>
</evidence>
<dbReference type="EMBL" id="AB113387">
    <property type="protein sequence ID" value="BAD06369.1"/>
    <property type="molecule type" value="mRNA"/>
</dbReference>
<dbReference type="EMBL" id="BC085793">
    <property type="protein sequence ID" value="AAH85793.1"/>
    <property type="molecule type" value="mRNA"/>
</dbReference>
<dbReference type="EMBL" id="AF539750">
    <property type="protein sequence ID" value="AAN31758.1"/>
    <property type="molecule type" value="mRNA"/>
</dbReference>
<dbReference type="RefSeq" id="NP_446385.1">
    <molecule id="Q767I8-1"/>
    <property type="nucleotide sequence ID" value="NM_053933.2"/>
</dbReference>
<dbReference type="SMR" id="Q767I8"/>
<dbReference type="BioGRID" id="250597">
    <property type="interactions" value="1"/>
</dbReference>
<dbReference type="FunCoup" id="Q767I8">
    <property type="interactions" value="257"/>
</dbReference>
<dbReference type="STRING" id="10116.ENSRNOP00000067199"/>
<dbReference type="GlyCosmos" id="Q767I8">
    <property type="glycosylation" value="3 sites, No reported glycans"/>
</dbReference>
<dbReference type="GlyGen" id="Q767I8">
    <property type="glycosylation" value="3 sites"/>
</dbReference>
<dbReference type="iPTMnet" id="Q767I8"/>
<dbReference type="PhosphoSitePlus" id="Q767I8"/>
<dbReference type="PaxDb" id="10116-ENSRNOP00000067199"/>
<dbReference type="Ensembl" id="ENSRNOT00000079794.2">
    <molecule id="Q767I8-1"/>
    <property type="protein sequence ID" value="ENSRNOP00000075260.2"/>
    <property type="gene ID" value="ENSRNOG00000020119.9"/>
</dbReference>
<dbReference type="GeneID" id="116741"/>
<dbReference type="KEGG" id="rno:116741"/>
<dbReference type="UCSC" id="RGD:620337">
    <molecule id="Q767I8-1"/>
    <property type="organism name" value="rat"/>
</dbReference>
<dbReference type="AGR" id="RGD:620337"/>
<dbReference type="CTD" id="56144"/>
<dbReference type="RGD" id="620337">
    <property type="gene designation" value="Pcdha4"/>
</dbReference>
<dbReference type="eggNOG" id="KOG3594">
    <property type="taxonomic scope" value="Eukaryota"/>
</dbReference>
<dbReference type="GeneTree" id="ENSGT00940000160554"/>
<dbReference type="InParanoid" id="Q767I8"/>
<dbReference type="OrthoDB" id="6252479at2759"/>
<dbReference type="PRO" id="PR:Q767I8"/>
<dbReference type="Proteomes" id="UP000002494">
    <property type="component" value="Chromosome 18"/>
</dbReference>
<dbReference type="GO" id="GO:0005783">
    <property type="term" value="C:endoplasmic reticulum"/>
    <property type="evidence" value="ECO:0000266"/>
    <property type="project" value="RGD"/>
</dbReference>
<dbReference type="GO" id="GO:0016020">
    <property type="term" value="C:membrane"/>
    <property type="evidence" value="ECO:0000266"/>
    <property type="project" value="RGD"/>
</dbReference>
<dbReference type="GO" id="GO:0005886">
    <property type="term" value="C:plasma membrane"/>
    <property type="evidence" value="ECO:0000318"/>
    <property type="project" value="GO_Central"/>
</dbReference>
<dbReference type="GO" id="GO:0045202">
    <property type="term" value="C:synapse"/>
    <property type="evidence" value="ECO:0000266"/>
    <property type="project" value="RGD"/>
</dbReference>
<dbReference type="GO" id="GO:0005509">
    <property type="term" value="F:calcium ion binding"/>
    <property type="evidence" value="ECO:0000250"/>
    <property type="project" value="UniProtKB"/>
</dbReference>
<dbReference type="GO" id="GO:0042802">
    <property type="term" value="F:identical protein binding"/>
    <property type="evidence" value="ECO:0000250"/>
    <property type="project" value="UniProtKB"/>
</dbReference>
<dbReference type="GO" id="GO:0007155">
    <property type="term" value="P:cell adhesion"/>
    <property type="evidence" value="ECO:0000318"/>
    <property type="project" value="GO_Central"/>
</dbReference>
<dbReference type="GO" id="GO:0007156">
    <property type="term" value="P:homophilic cell adhesion via plasma membrane adhesion molecules"/>
    <property type="evidence" value="ECO:0007669"/>
    <property type="project" value="InterPro"/>
</dbReference>
<dbReference type="CDD" id="cd11304">
    <property type="entry name" value="Cadherin_repeat"/>
    <property type="match status" value="6"/>
</dbReference>
<dbReference type="FunFam" id="2.60.40.60:FF:000001">
    <property type="entry name" value="Protocadherin alpha 2"/>
    <property type="match status" value="1"/>
</dbReference>
<dbReference type="FunFam" id="2.60.40.60:FF:000002">
    <property type="entry name" value="Protocadherin alpha 2"/>
    <property type="match status" value="1"/>
</dbReference>
<dbReference type="FunFam" id="2.60.40.60:FF:000003">
    <property type="entry name" value="Protocadherin alpha 2"/>
    <property type="match status" value="1"/>
</dbReference>
<dbReference type="FunFam" id="2.60.40.60:FF:000006">
    <property type="entry name" value="Protocadherin alpha 2"/>
    <property type="match status" value="1"/>
</dbReference>
<dbReference type="FunFam" id="2.60.40.60:FF:000007">
    <property type="entry name" value="Protocadherin alpha 2"/>
    <property type="match status" value="1"/>
</dbReference>
<dbReference type="FunFam" id="2.60.40.60:FF:000076">
    <property type="entry name" value="Protocadherin alpha 2"/>
    <property type="match status" value="1"/>
</dbReference>
<dbReference type="Gene3D" id="2.60.40.60">
    <property type="entry name" value="Cadherins"/>
    <property type="match status" value="6"/>
</dbReference>
<dbReference type="InterPro" id="IPR002126">
    <property type="entry name" value="Cadherin-like_dom"/>
</dbReference>
<dbReference type="InterPro" id="IPR015919">
    <property type="entry name" value="Cadherin-like_sf"/>
</dbReference>
<dbReference type="InterPro" id="IPR031904">
    <property type="entry name" value="Cadherin_CBD"/>
</dbReference>
<dbReference type="InterPro" id="IPR020894">
    <property type="entry name" value="Cadherin_CS"/>
</dbReference>
<dbReference type="InterPro" id="IPR013164">
    <property type="entry name" value="Cadherin_N"/>
</dbReference>
<dbReference type="InterPro" id="IPR050174">
    <property type="entry name" value="Protocadherin/Cadherin-CA"/>
</dbReference>
<dbReference type="PANTHER" id="PTHR24028">
    <property type="entry name" value="CADHERIN-87A"/>
    <property type="match status" value="1"/>
</dbReference>
<dbReference type="PANTHER" id="PTHR24028:SF133">
    <property type="entry name" value="PROTOCADHERIN ALPHA-4"/>
    <property type="match status" value="1"/>
</dbReference>
<dbReference type="Pfam" id="PF00028">
    <property type="entry name" value="Cadherin"/>
    <property type="match status" value="5"/>
</dbReference>
<dbReference type="Pfam" id="PF08266">
    <property type="entry name" value="Cadherin_2"/>
    <property type="match status" value="1"/>
</dbReference>
<dbReference type="Pfam" id="PF15974">
    <property type="entry name" value="Cadherin_tail"/>
    <property type="match status" value="1"/>
</dbReference>
<dbReference type="PRINTS" id="PR00205">
    <property type="entry name" value="CADHERIN"/>
</dbReference>
<dbReference type="SMART" id="SM00112">
    <property type="entry name" value="CA"/>
    <property type="match status" value="6"/>
</dbReference>
<dbReference type="SUPFAM" id="SSF49313">
    <property type="entry name" value="Cadherin-like"/>
    <property type="match status" value="6"/>
</dbReference>
<dbReference type="PROSITE" id="PS00232">
    <property type="entry name" value="CADHERIN_1"/>
    <property type="match status" value="5"/>
</dbReference>
<dbReference type="PROSITE" id="PS50268">
    <property type="entry name" value="CADHERIN_2"/>
    <property type="match status" value="6"/>
</dbReference>
<proteinExistence type="evidence at transcript level"/>
<reference key="1">
    <citation type="journal article" date="2004" name="Genomics">
        <title>Genomic sequence and organization of the family of CNR/Pcdh genes in rat.</title>
        <authorList>
            <person name="Yanase H."/>
            <person name="Sugino H."/>
            <person name="Yagi T."/>
        </authorList>
    </citation>
    <scope>NUCLEOTIDE SEQUENCE [MRNA] (ISOFORM 1)</scope>
    <scope>TISSUE SPECIFICITY</scope>
    <source>
        <strain>Long Evans</strain>
        <tissue>Brain</tissue>
    </source>
</reference>
<reference key="2">
    <citation type="journal article" date="2004" name="Genome Res.">
        <title>The status, quality, and expansion of the NIH full-length cDNA project: the Mammalian Gene Collection (MGC).</title>
        <authorList>
            <consortium name="The MGC Project Team"/>
        </authorList>
    </citation>
    <scope>NUCLEOTIDE SEQUENCE [LARGE SCALE MRNA] (ISOFORM 2)</scope>
    <source>
        <tissue>Kidney</tissue>
    </source>
</reference>
<reference key="3">
    <citation type="submission" date="2002-08" db="EMBL/GenBank/DDBJ databases">
        <authorList>
            <person name="Johnson K.J."/>
            <person name="Zecevic A."/>
            <person name="Kwon E.J."/>
        </authorList>
    </citation>
    <scope>NUCLEOTIDE SEQUENCE [MRNA] OF 1-512 (ISOFORMS 1/2)</scope>
    <source>
        <strain>Fischer 344</strain>
    </source>
</reference>
<keyword id="KW-0025">Alternative splicing</keyword>
<keyword id="KW-0106">Calcium</keyword>
<keyword id="KW-0130">Cell adhesion</keyword>
<keyword id="KW-1003">Cell membrane</keyword>
<keyword id="KW-1015">Disulfide bond</keyword>
<keyword id="KW-0325">Glycoprotein</keyword>
<keyword id="KW-0472">Membrane</keyword>
<keyword id="KW-0479">Metal-binding</keyword>
<keyword id="KW-1185">Reference proteome</keyword>
<keyword id="KW-0677">Repeat</keyword>
<keyword id="KW-0732">Signal</keyword>
<keyword id="KW-0812">Transmembrane</keyword>
<keyword id="KW-1133">Transmembrane helix</keyword>
<organism>
    <name type="scientific">Rattus norvegicus</name>
    <name type="common">Rat</name>
    <dbReference type="NCBI Taxonomy" id="10116"/>
    <lineage>
        <taxon>Eukaryota</taxon>
        <taxon>Metazoa</taxon>
        <taxon>Chordata</taxon>
        <taxon>Craniata</taxon>
        <taxon>Vertebrata</taxon>
        <taxon>Euteleostomi</taxon>
        <taxon>Mammalia</taxon>
        <taxon>Eutheria</taxon>
        <taxon>Euarchontoglires</taxon>
        <taxon>Glires</taxon>
        <taxon>Rodentia</taxon>
        <taxon>Myomorpha</taxon>
        <taxon>Muroidea</taxon>
        <taxon>Muridae</taxon>
        <taxon>Murinae</taxon>
        <taxon>Rattus</taxon>
    </lineage>
</organism>
<comment type="function">
    <text evidence="1">Calcium-dependent cell-adhesion protein involved in cells self-recognition and non-self discrimination. Thereby, it is involved in the establishment and maintenance of specific neuronal connections in the brain.</text>
</comment>
<comment type="subunit">
    <text evidence="1">Forms homodimers in trans (molecules expressed by two different cells). Forms promiscuous heterodimers in cis (at the plasma membrane of the same cell) with other protocadherins. Interacts with FYN.</text>
</comment>
<comment type="subcellular location">
    <subcellularLocation>
        <location evidence="1">Cell membrane</location>
        <topology evidence="1">Single-pass type I membrane protein</topology>
    </subcellularLocation>
    <text evidence="1">Detected in dendrites and synapses.</text>
</comment>
<comment type="alternative products">
    <event type="alternative splicing"/>
    <isoform>
        <id>Q767I8-1</id>
        <name>1</name>
        <sequence type="displayed"/>
    </isoform>
    <isoform>
        <id>Q767I8-2</id>
        <name>2</name>
        <sequence type="described" ref="VSP_019416"/>
    </isoform>
</comment>
<comment type="tissue specificity">
    <text evidence="5">Detected in brain.</text>
</comment>
<comment type="domain">
    <text evidence="1">Cadherin 1 to cadherin 4 domains mediate homophilic trans-interaction, the interaction with an identical protocadherin expressed by a neighboring cell. This is a head-to-tail interaction, the cadherin 1 domain interacting with the cadherin 4 domain and the cadherin 2 domain interacting the cadherin 3 domain of the other protocadherin. The cadherin 6 domain mediates promiscuous interactions with protocadherins on the same cell membrane. Each cadherin domain binds three calcium ions.</text>
</comment>
<sequence length="947" mass="103042">MEFSWGSGQESQRLLLSFLFLAIWEPGNSQLHYSIPEEAKHGTFVGRIAQDLGLELAELVPRLFRVASKDRGDLLEVNLQNGILFVNSRIDREELCGRSAECSIHLEVIVDRPLQVFHVEVEVRDINDNPPTFPTTQKNLFIAESRPLDTWFPLEGASDSDIGINAVLTYRLSPNDYFSLEKPTNSERVKGLGLILRKSLDREETPELFLVLTVTDGGKPELTGSVQLLITVLDANDNSPVFDRSLYTVKLPENVPNGTLVVKVNASDLDEGANGEVMYSFSTDISPNVKNKFHIDPVTGEIAVKGYIDFEECTSYEILIEGIDKGQLPLSGHCKVIVQVEDINDNAPELEFKSLSLPIRENAPVGTVIALISVFDPDTGVNGQVTCSLTPQVPFKLVSTFKNYYSLVLDSALDRETTADYKVVVIARDGGLPSLWATASVSVEVADVNDNAPAFAQPEYTVFVKENNPPGAHIFTVSAVDADSQENALVSYSLVERRVGERLLSSYVSVHAESGKVFALQPLDHEELELLQFQVSARDAGVPALGSNVTLQVFVLDENDNAPTLLEPEAGISGGIVSRLVSRSVGAGHVVAKVRAVDADSGYNAWLSYELQSSEGNSRSLFRVGLYTGEISTTRSLDEADSPRQRLLVLVKDHGDPAMMVTATVLVSLVENGPLPKAPSRVSTRVTNAEASLVDVNVYLIIAICAVSSLLVLTLLLYSALRCSTVPSESVCGPPKPVMVCSSAVGSWSYSQQRRQRVCSGEYPPKTDLMAFSPSLSDSRDREDQLQSTEDSSGKPRQPNPDWRYSASLRAGMHSSVHLEEAGILRAGPGGPDQQWPTVSSATPEPEAGEVSPPVGAGVNSNSWTFKYGPGNPKQPGPGELPDKFIIPGSPAIISIRQESANNQIDKSDFITFGKKEETKKKKKKKKGNKTQEKKEKGNSTTDNSDQ</sequence>
<gene>
    <name evidence="10" type="primary">Pcdha4</name>
    <name evidence="6" type="synonym">Cnrv4</name>
</gene>
<feature type="signal peptide" evidence="2">
    <location>
        <begin position="1"/>
        <end position="29"/>
    </location>
</feature>
<feature type="chain" id="PRO_0000240664" description="Protocadherin alpha-4">
    <location>
        <begin position="30"/>
        <end position="947"/>
    </location>
</feature>
<feature type="topological domain" description="Extracellular" evidence="1">
    <location>
        <begin position="30"/>
        <end position="697"/>
    </location>
</feature>
<feature type="transmembrane region" description="Helical" evidence="2">
    <location>
        <begin position="698"/>
        <end position="718"/>
    </location>
</feature>
<feature type="topological domain" description="Cytoplasmic" evidence="1">
    <location>
        <begin position="719"/>
        <end position="947"/>
    </location>
</feature>
<feature type="domain" description="Cadherin 1" evidence="3">
    <location>
        <begin position="30"/>
        <end position="133"/>
    </location>
</feature>
<feature type="domain" description="Cadherin 2" evidence="3">
    <location>
        <begin position="134"/>
        <end position="242"/>
    </location>
</feature>
<feature type="domain" description="Cadherin 3" evidence="3">
    <location>
        <begin position="243"/>
        <end position="350"/>
    </location>
</feature>
<feature type="domain" description="Cadherin 4" evidence="3">
    <location>
        <begin position="351"/>
        <end position="455"/>
    </location>
</feature>
<feature type="domain" description="Cadherin 5" evidence="3">
    <location>
        <begin position="456"/>
        <end position="565"/>
    </location>
</feature>
<feature type="domain" description="Cadherin 6" evidence="3">
    <location>
        <begin position="573"/>
        <end position="681"/>
    </location>
</feature>
<feature type="repeat" description="PXXP 1">
    <location>
        <begin position="734"/>
        <end position="737"/>
    </location>
</feature>
<feature type="repeat" description="PXXP 2">
    <location>
        <begin position="774"/>
        <end position="777"/>
    </location>
</feature>
<feature type="repeat" description="PXXP 3">
    <location>
        <begin position="796"/>
        <end position="799"/>
    </location>
</feature>
<feature type="repeat" description="PXXP 4">
    <location>
        <begin position="829"/>
        <end position="832"/>
    </location>
</feature>
<feature type="repeat" description="PXXP 5">
    <location>
        <begin position="870"/>
        <end position="873"/>
    </location>
</feature>
<feature type="repeat" description="PXXP 6">
    <location>
        <begin position="888"/>
        <end position="891"/>
    </location>
</feature>
<feature type="region of interest" description="6 X 4 AA repeats of P-X-X-P">
    <location>
        <begin position="734"/>
        <end position="891"/>
    </location>
</feature>
<feature type="region of interest" description="Required for interaction with FYN" evidence="1">
    <location>
        <begin position="738"/>
        <end position="947"/>
    </location>
</feature>
<feature type="region of interest" description="Disordered" evidence="4">
    <location>
        <begin position="761"/>
        <end position="805"/>
    </location>
</feature>
<feature type="region of interest" description="Disordered" evidence="4">
    <location>
        <begin position="824"/>
        <end position="853"/>
    </location>
</feature>
<feature type="region of interest" description="Disordered" evidence="4">
    <location>
        <begin position="897"/>
        <end position="947"/>
    </location>
</feature>
<feature type="compositionally biased region" description="Basic and acidic residues" evidence="4">
    <location>
        <begin position="906"/>
        <end position="920"/>
    </location>
</feature>
<feature type="glycosylation site" description="N-linked (GlcNAc...) asparagine" evidence="2">
    <location>
        <position position="257"/>
    </location>
</feature>
<feature type="glycosylation site" description="N-linked (GlcNAc...) asparagine" evidence="2">
    <location>
        <position position="265"/>
    </location>
</feature>
<feature type="glycosylation site" description="N-linked (GlcNAc...) asparagine" evidence="2">
    <location>
        <position position="548"/>
    </location>
</feature>
<feature type="disulfide bond" evidence="1">
    <location>
        <begin position="96"/>
        <end position="102"/>
    </location>
</feature>
<feature type="splice variant" id="VSP_019416" description="In isoform 2." evidence="7">
    <location>
        <begin position="535"/>
        <end position="795"/>
    </location>
</feature>
<feature type="sequence conflict" description="In Ref. 3; AAN31758." evidence="8" ref="3">
    <original>K</original>
    <variation>R</variation>
    <location>
        <position position="69"/>
    </location>
</feature>
<feature type="sequence conflict" description="In Ref. 3; AAN31758." evidence="8" ref="3">
    <original>R</original>
    <variation>Q</variation>
    <location>
        <position position="188"/>
    </location>
</feature>
<feature type="sequence conflict" description="In Ref. 3; AAN31758." evidence="8" ref="3">
    <original>V</original>
    <variation>L</variation>
    <location>
        <position position="255"/>
    </location>
</feature>
<feature type="sequence conflict" description="In Ref. 3; AAN31758." evidence="8" ref="3">
    <original>I</original>
    <variation>H</variation>
    <location>
        <position position="372"/>
    </location>
</feature>
<accession>Q767I8</accession>
<accession>Q5U2Z9</accession>
<accession>Q8CJ01</accession>